<accession>A8GHW6</accession>
<gene>
    <name evidence="1" type="primary">rodZ</name>
    <name type="ordered locus">Spro_3610</name>
</gene>
<proteinExistence type="inferred from homology"/>
<comment type="function">
    <text evidence="1">Cytoskeletal protein that is involved in cell-shape control through regulation of the length of the long axis.</text>
</comment>
<comment type="subcellular location">
    <subcellularLocation>
        <location evidence="1">Cell inner membrane</location>
        <topology evidence="1">Single-pass type II membrane protein</topology>
    </subcellularLocation>
    <text evidence="1">Forms helical filaments along the long axis of the cell.</text>
</comment>
<comment type="domain">
    <text evidence="1">The helix-turn-helix (HTH) motif in the cytoplasmic domain of the N-terminus is involved in the formation of spirals to maintain the rigid rod shape. As this protein is anchored in the cytoplasmic membrane, the HTH motif may contribute to protein-protein interactions to form the RodZ helix, which is localized beneath the cytoplasmic membrane. The C-terminal domain may be critical for determination of the rod shape by probably interacting with enzymes required for synthesis of the peptidoglycan layer, including PBPs in the periplasm.</text>
</comment>
<comment type="similarity">
    <text evidence="1">Belongs to the RodZ family.</text>
</comment>
<dbReference type="EMBL" id="CP000826">
    <property type="protein sequence ID" value="ABV42706.1"/>
    <property type="molecule type" value="Genomic_DNA"/>
</dbReference>
<dbReference type="SMR" id="A8GHW6"/>
<dbReference type="STRING" id="399741.Spro_3610"/>
<dbReference type="KEGG" id="spe:Spro_3610"/>
<dbReference type="eggNOG" id="COG1426">
    <property type="taxonomic scope" value="Bacteria"/>
</dbReference>
<dbReference type="HOGENOM" id="CLU_047530_3_1_6"/>
<dbReference type="OrthoDB" id="9790252at2"/>
<dbReference type="GO" id="GO:0005886">
    <property type="term" value="C:plasma membrane"/>
    <property type="evidence" value="ECO:0007669"/>
    <property type="project" value="UniProtKB-SubCell"/>
</dbReference>
<dbReference type="GO" id="GO:0003677">
    <property type="term" value="F:DNA binding"/>
    <property type="evidence" value="ECO:0007669"/>
    <property type="project" value="UniProtKB-KW"/>
</dbReference>
<dbReference type="GO" id="GO:0008360">
    <property type="term" value="P:regulation of cell shape"/>
    <property type="evidence" value="ECO:0007669"/>
    <property type="project" value="UniProtKB-UniRule"/>
</dbReference>
<dbReference type="CDD" id="cd00093">
    <property type="entry name" value="HTH_XRE"/>
    <property type="match status" value="1"/>
</dbReference>
<dbReference type="Gene3D" id="1.10.260.40">
    <property type="entry name" value="lambda repressor-like DNA-binding domains"/>
    <property type="match status" value="1"/>
</dbReference>
<dbReference type="HAMAP" id="MF_02017">
    <property type="entry name" value="RodZ"/>
    <property type="match status" value="1"/>
</dbReference>
<dbReference type="InterPro" id="IPR050400">
    <property type="entry name" value="Bact_Cytoskel_RodZ"/>
</dbReference>
<dbReference type="InterPro" id="IPR001387">
    <property type="entry name" value="Cro/C1-type_HTH"/>
</dbReference>
<dbReference type="InterPro" id="IPR010982">
    <property type="entry name" value="Lambda_DNA-bd_dom_sf"/>
</dbReference>
<dbReference type="InterPro" id="IPR023690">
    <property type="entry name" value="RodZ"/>
</dbReference>
<dbReference type="InterPro" id="IPR025194">
    <property type="entry name" value="RodZ-like_C"/>
</dbReference>
<dbReference type="NCBIfam" id="NF008109">
    <property type="entry name" value="PRK10856.1"/>
    <property type="match status" value="1"/>
</dbReference>
<dbReference type="PANTHER" id="PTHR34475">
    <property type="match status" value="1"/>
</dbReference>
<dbReference type="PANTHER" id="PTHR34475:SF1">
    <property type="entry name" value="CYTOSKELETON PROTEIN RODZ"/>
    <property type="match status" value="1"/>
</dbReference>
<dbReference type="Pfam" id="PF13413">
    <property type="entry name" value="HTH_25"/>
    <property type="match status" value="1"/>
</dbReference>
<dbReference type="Pfam" id="PF13464">
    <property type="entry name" value="RodZ_C"/>
    <property type="match status" value="1"/>
</dbReference>
<dbReference type="SMART" id="SM00530">
    <property type="entry name" value="HTH_XRE"/>
    <property type="match status" value="1"/>
</dbReference>
<dbReference type="SUPFAM" id="SSF47413">
    <property type="entry name" value="lambda repressor-like DNA-binding domains"/>
    <property type="match status" value="1"/>
</dbReference>
<dbReference type="PROSITE" id="PS50943">
    <property type="entry name" value="HTH_CROC1"/>
    <property type="match status" value="1"/>
</dbReference>
<protein>
    <recommendedName>
        <fullName evidence="1">Cytoskeleton protein RodZ</fullName>
    </recommendedName>
</protein>
<name>RODZ_SERP5</name>
<feature type="chain" id="PRO_0000361861" description="Cytoskeleton protein RodZ">
    <location>
        <begin position="1"/>
        <end position="323"/>
    </location>
</feature>
<feature type="topological domain" description="Cytoplasmic" evidence="1">
    <location>
        <begin position="1"/>
        <end position="111"/>
    </location>
</feature>
<feature type="transmembrane region" description="Helical; Signal-anchor for type II membrane protein" evidence="1">
    <location>
        <begin position="112"/>
        <end position="132"/>
    </location>
</feature>
<feature type="topological domain" description="Periplasmic" evidence="1">
    <location>
        <begin position="133"/>
        <end position="323"/>
    </location>
</feature>
<feature type="domain" description="HTH cro/C1-type" evidence="1">
    <location>
        <begin position="19"/>
        <end position="71"/>
    </location>
</feature>
<feature type="DNA-binding region" description="H-T-H motif" evidence="1">
    <location>
        <begin position="30"/>
        <end position="49"/>
    </location>
</feature>
<feature type="region of interest" description="Disordered" evidence="2">
    <location>
        <begin position="149"/>
        <end position="236"/>
    </location>
</feature>
<feature type="compositionally biased region" description="Polar residues" evidence="2">
    <location>
        <begin position="149"/>
        <end position="172"/>
    </location>
</feature>
<feature type="compositionally biased region" description="Polar residues" evidence="2">
    <location>
        <begin position="179"/>
        <end position="214"/>
    </location>
</feature>
<feature type="compositionally biased region" description="Low complexity" evidence="2">
    <location>
        <begin position="215"/>
        <end position="234"/>
    </location>
</feature>
<reference key="1">
    <citation type="submission" date="2007-09" db="EMBL/GenBank/DDBJ databases">
        <title>Complete sequence of chromosome of Serratia proteamaculans 568.</title>
        <authorList>
            <consortium name="US DOE Joint Genome Institute"/>
            <person name="Copeland A."/>
            <person name="Lucas S."/>
            <person name="Lapidus A."/>
            <person name="Barry K."/>
            <person name="Glavina del Rio T."/>
            <person name="Dalin E."/>
            <person name="Tice H."/>
            <person name="Pitluck S."/>
            <person name="Chain P."/>
            <person name="Malfatti S."/>
            <person name="Shin M."/>
            <person name="Vergez L."/>
            <person name="Schmutz J."/>
            <person name="Larimer F."/>
            <person name="Land M."/>
            <person name="Hauser L."/>
            <person name="Kyrpides N."/>
            <person name="Kim E."/>
            <person name="Taghavi S."/>
            <person name="Newman L."/>
            <person name="Vangronsveld J."/>
            <person name="van der Lelie D."/>
            <person name="Richardson P."/>
        </authorList>
    </citation>
    <scope>NUCLEOTIDE SEQUENCE [LARGE SCALE GENOMIC DNA]</scope>
    <source>
        <strain>568</strain>
    </source>
</reference>
<evidence type="ECO:0000255" key="1">
    <source>
        <dbReference type="HAMAP-Rule" id="MF_02017"/>
    </source>
</evidence>
<evidence type="ECO:0000256" key="2">
    <source>
        <dbReference type="SAM" id="MobiDB-lite"/>
    </source>
</evidence>
<keyword id="KW-0997">Cell inner membrane</keyword>
<keyword id="KW-1003">Cell membrane</keyword>
<keyword id="KW-0133">Cell shape</keyword>
<keyword id="KW-0238">DNA-binding</keyword>
<keyword id="KW-0472">Membrane</keyword>
<keyword id="KW-0735">Signal-anchor</keyword>
<keyword id="KW-0812">Transmembrane</keyword>
<keyword id="KW-1133">Transmembrane helix</keyword>
<organism>
    <name type="scientific">Serratia proteamaculans (strain 568)</name>
    <dbReference type="NCBI Taxonomy" id="399741"/>
    <lineage>
        <taxon>Bacteria</taxon>
        <taxon>Pseudomonadati</taxon>
        <taxon>Pseudomonadota</taxon>
        <taxon>Gammaproteobacteria</taxon>
        <taxon>Enterobacterales</taxon>
        <taxon>Yersiniaceae</taxon>
        <taxon>Serratia</taxon>
    </lineage>
</organism>
<sequence>MNTEASQDKTVSMTTGERLRQAREQLGLSQQAVAERLCLKMSTVRDIEEDNLSADLASTFVRGYIRSYAKLVRLPEDELLPMLAKQAPLKVAKVAPMQSFSLGKRRKKRDGWLMSFTWLIVFVVVGLTGAWWWQNHKAQQEEIVTMADQSSAQLSQNNEGQSVPLTDSNADNSAPLADNGSTPVDTGVAPQQSQTPAVSGSATAQQPAVVSPSQTTLPETTPAAPTAPLPTADAGVTAPAVDPNALVMEFSADCWLQVSDANGKTLYSGSQKSGGKLSLAGTAPYKLTIGAPAAVQIQYQGKPVDLSRFVKSNRVARLTVAAQ</sequence>